<gene>
    <name evidence="1" type="primary">rpoZ</name>
    <name type="ordered locus">BLA_1158</name>
</gene>
<sequence length="94" mass="10368">MAFGTEPIPTGLADPPIDDLMEHADSKYALAIFAAKRARQINSYFTQLNEGLLQNVGPLVEYKSQEKPLSIAFREINEGLLEETLGEDDLSEGN</sequence>
<proteinExistence type="inferred from homology"/>
<accession>B8DTW7</accession>
<evidence type="ECO:0000255" key="1">
    <source>
        <dbReference type="HAMAP-Rule" id="MF_00366"/>
    </source>
</evidence>
<reference key="1">
    <citation type="journal article" date="2009" name="J. Bacteriol.">
        <title>Genome sequence of the probiotic bacterium Bifidobacterium animalis subsp. lactis AD011.</title>
        <authorList>
            <person name="Kim J.F."/>
            <person name="Jeong H."/>
            <person name="Yu D.S."/>
            <person name="Choi S.-H."/>
            <person name="Hur C.-G."/>
            <person name="Park M.-S."/>
            <person name="Yoon S.H."/>
            <person name="Kim D.-W."/>
            <person name="Ji G.E."/>
            <person name="Park H.-S."/>
            <person name="Oh T.K."/>
        </authorList>
    </citation>
    <scope>NUCLEOTIDE SEQUENCE [LARGE SCALE GENOMIC DNA]</scope>
    <source>
        <strain>AD011</strain>
    </source>
</reference>
<name>RPOZ_BIFA0</name>
<keyword id="KW-0240">DNA-directed RNA polymerase</keyword>
<keyword id="KW-0548">Nucleotidyltransferase</keyword>
<keyword id="KW-1185">Reference proteome</keyword>
<keyword id="KW-0804">Transcription</keyword>
<keyword id="KW-0808">Transferase</keyword>
<feature type="chain" id="PRO_1000133719" description="DNA-directed RNA polymerase subunit omega">
    <location>
        <begin position="1"/>
        <end position="94"/>
    </location>
</feature>
<dbReference type="EC" id="2.7.7.6" evidence="1"/>
<dbReference type="EMBL" id="CP001213">
    <property type="protein sequence ID" value="ACL29446.1"/>
    <property type="molecule type" value="Genomic_DNA"/>
</dbReference>
<dbReference type="RefSeq" id="WP_004218889.1">
    <property type="nucleotide sequence ID" value="NC_011835.1"/>
</dbReference>
<dbReference type="SMR" id="B8DTW7"/>
<dbReference type="STRING" id="442563.BLA_1158"/>
<dbReference type="GeneID" id="29695488"/>
<dbReference type="KEGG" id="bla:BLA_1158"/>
<dbReference type="PATRIC" id="fig|442563.4.peg.1216"/>
<dbReference type="HOGENOM" id="CLU_125406_1_1_11"/>
<dbReference type="Proteomes" id="UP000002456">
    <property type="component" value="Chromosome"/>
</dbReference>
<dbReference type="GO" id="GO:0000428">
    <property type="term" value="C:DNA-directed RNA polymerase complex"/>
    <property type="evidence" value="ECO:0007669"/>
    <property type="project" value="UniProtKB-KW"/>
</dbReference>
<dbReference type="GO" id="GO:0003677">
    <property type="term" value="F:DNA binding"/>
    <property type="evidence" value="ECO:0007669"/>
    <property type="project" value="UniProtKB-UniRule"/>
</dbReference>
<dbReference type="GO" id="GO:0003899">
    <property type="term" value="F:DNA-directed RNA polymerase activity"/>
    <property type="evidence" value="ECO:0007669"/>
    <property type="project" value="UniProtKB-UniRule"/>
</dbReference>
<dbReference type="GO" id="GO:0006351">
    <property type="term" value="P:DNA-templated transcription"/>
    <property type="evidence" value="ECO:0007669"/>
    <property type="project" value="UniProtKB-UniRule"/>
</dbReference>
<dbReference type="Gene3D" id="3.90.940.10">
    <property type="match status" value="1"/>
</dbReference>
<dbReference type="HAMAP" id="MF_00366">
    <property type="entry name" value="RNApol_bact_RpoZ"/>
    <property type="match status" value="1"/>
</dbReference>
<dbReference type="InterPro" id="IPR003716">
    <property type="entry name" value="DNA-dir_RNA_pol_omega"/>
</dbReference>
<dbReference type="InterPro" id="IPR006110">
    <property type="entry name" value="Pol_omega/Rpo6/RPB6"/>
</dbReference>
<dbReference type="InterPro" id="IPR036161">
    <property type="entry name" value="RPB6/omega-like_sf"/>
</dbReference>
<dbReference type="NCBIfam" id="TIGR00690">
    <property type="entry name" value="rpoZ"/>
    <property type="match status" value="1"/>
</dbReference>
<dbReference type="PANTHER" id="PTHR34476">
    <property type="entry name" value="DNA-DIRECTED RNA POLYMERASE SUBUNIT OMEGA"/>
    <property type="match status" value="1"/>
</dbReference>
<dbReference type="PANTHER" id="PTHR34476:SF1">
    <property type="entry name" value="DNA-DIRECTED RNA POLYMERASE SUBUNIT OMEGA"/>
    <property type="match status" value="1"/>
</dbReference>
<dbReference type="Pfam" id="PF01192">
    <property type="entry name" value="RNA_pol_Rpb6"/>
    <property type="match status" value="1"/>
</dbReference>
<dbReference type="SMART" id="SM01409">
    <property type="entry name" value="RNA_pol_Rpb6"/>
    <property type="match status" value="1"/>
</dbReference>
<dbReference type="SUPFAM" id="SSF63562">
    <property type="entry name" value="RPB6/omega subunit-like"/>
    <property type="match status" value="1"/>
</dbReference>
<protein>
    <recommendedName>
        <fullName evidence="1">DNA-directed RNA polymerase subunit omega</fullName>
        <shortName evidence="1">RNAP omega subunit</shortName>
        <ecNumber evidence="1">2.7.7.6</ecNumber>
    </recommendedName>
    <alternativeName>
        <fullName evidence="1">RNA polymerase omega subunit</fullName>
    </alternativeName>
    <alternativeName>
        <fullName evidence="1">Transcriptase subunit omega</fullName>
    </alternativeName>
</protein>
<comment type="function">
    <text evidence="1">Promotes RNA polymerase assembly. Latches the N- and C-terminal regions of the beta' subunit thereby facilitating its interaction with the beta and alpha subunits.</text>
</comment>
<comment type="catalytic activity">
    <reaction evidence="1">
        <text>RNA(n) + a ribonucleoside 5'-triphosphate = RNA(n+1) + diphosphate</text>
        <dbReference type="Rhea" id="RHEA:21248"/>
        <dbReference type="Rhea" id="RHEA-COMP:14527"/>
        <dbReference type="Rhea" id="RHEA-COMP:17342"/>
        <dbReference type="ChEBI" id="CHEBI:33019"/>
        <dbReference type="ChEBI" id="CHEBI:61557"/>
        <dbReference type="ChEBI" id="CHEBI:140395"/>
        <dbReference type="EC" id="2.7.7.6"/>
    </reaction>
</comment>
<comment type="subunit">
    <text evidence="1">The RNAP catalytic core consists of 2 alpha, 1 beta, 1 beta' and 1 omega subunit. When a sigma factor is associated with the core the holoenzyme is formed, which can initiate transcription.</text>
</comment>
<comment type="similarity">
    <text evidence="1">Belongs to the RNA polymerase subunit omega family.</text>
</comment>
<organism>
    <name type="scientific">Bifidobacterium animalis subsp. lactis (strain AD011)</name>
    <dbReference type="NCBI Taxonomy" id="442563"/>
    <lineage>
        <taxon>Bacteria</taxon>
        <taxon>Bacillati</taxon>
        <taxon>Actinomycetota</taxon>
        <taxon>Actinomycetes</taxon>
        <taxon>Bifidobacteriales</taxon>
        <taxon>Bifidobacteriaceae</taxon>
        <taxon>Bifidobacterium</taxon>
    </lineage>
</organism>